<sequence length="149" mass="17355">MDIVAENRKVRFNYTILSEYDAGIVLLGSEVKSLRQHKVSMGDAYVLESGMELWVHNLHISEYNRSSYKNHSPLRVRKLLLRRREINKIAGSVKASGITVVPRLVYFNERGLAKVRIALVKGKKLYDKREAIKAREWEREKGRTMKRDI</sequence>
<dbReference type="EMBL" id="CP000235">
    <property type="protein sequence ID" value="ABD43560.1"/>
    <property type="molecule type" value="Genomic_DNA"/>
</dbReference>
<dbReference type="RefSeq" id="WP_011451343.1">
    <property type="nucleotide sequence ID" value="NC_007797.1"/>
</dbReference>
<dbReference type="SMR" id="Q2GIG5"/>
<dbReference type="STRING" id="212042.APH_1331"/>
<dbReference type="PaxDb" id="212042-APH_1331"/>
<dbReference type="EnsemblBacteria" id="ABD43560">
    <property type="protein sequence ID" value="ABD43560"/>
    <property type="gene ID" value="APH_1331"/>
</dbReference>
<dbReference type="GeneID" id="92747803"/>
<dbReference type="KEGG" id="aph:APH_1331"/>
<dbReference type="eggNOG" id="COG0691">
    <property type="taxonomic scope" value="Bacteria"/>
</dbReference>
<dbReference type="HOGENOM" id="CLU_108953_0_1_5"/>
<dbReference type="Proteomes" id="UP000001943">
    <property type="component" value="Chromosome"/>
</dbReference>
<dbReference type="GO" id="GO:0005829">
    <property type="term" value="C:cytosol"/>
    <property type="evidence" value="ECO:0007669"/>
    <property type="project" value="TreeGrafter"/>
</dbReference>
<dbReference type="GO" id="GO:0003723">
    <property type="term" value="F:RNA binding"/>
    <property type="evidence" value="ECO:0007669"/>
    <property type="project" value="UniProtKB-UniRule"/>
</dbReference>
<dbReference type="GO" id="GO:0070929">
    <property type="term" value="P:trans-translation"/>
    <property type="evidence" value="ECO:0007669"/>
    <property type="project" value="UniProtKB-UniRule"/>
</dbReference>
<dbReference type="CDD" id="cd09294">
    <property type="entry name" value="SmpB"/>
    <property type="match status" value="1"/>
</dbReference>
<dbReference type="Gene3D" id="2.40.280.10">
    <property type="match status" value="1"/>
</dbReference>
<dbReference type="HAMAP" id="MF_00023">
    <property type="entry name" value="SmpB"/>
    <property type="match status" value="1"/>
</dbReference>
<dbReference type="InterPro" id="IPR023620">
    <property type="entry name" value="SmpB"/>
</dbReference>
<dbReference type="InterPro" id="IPR000037">
    <property type="entry name" value="SsrA-bd_prot"/>
</dbReference>
<dbReference type="InterPro" id="IPR020081">
    <property type="entry name" value="SsrA-bd_prot_CS"/>
</dbReference>
<dbReference type="NCBIfam" id="NF003843">
    <property type="entry name" value="PRK05422.1"/>
    <property type="match status" value="1"/>
</dbReference>
<dbReference type="NCBIfam" id="TIGR00086">
    <property type="entry name" value="smpB"/>
    <property type="match status" value="1"/>
</dbReference>
<dbReference type="PANTHER" id="PTHR30308:SF2">
    <property type="entry name" value="SSRA-BINDING PROTEIN"/>
    <property type="match status" value="1"/>
</dbReference>
<dbReference type="PANTHER" id="PTHR30308">
    <property type="entry name" value="TMRNA-BINDING COMPONENT OF TRANS-TRANSLATION TAGGING COMPLEX"/>
    <property type="match status" value="1"/>
</dbReference>
<dbReference type="Pfam" id="PF01668">
    <property type="entry name" value="SmpB"/>
    <property type="match status" value="1"/>
</dbReference>
<dbReference type="SUPFAM" id="SSF74982">
    <property type="entry name" value="Small protein B (SmpB)"/>
    <property type="match status" value="1"/>
</dbReference>
<dbReference type="PROSITE" id="PS01317">
    <property type="entry name" value="SSRP"/>
    <property type="match status" value="1"/>
</dbReference>
<accession>Q2GIG5</accession>
<organism>
    <name type="scientific">Anaplasma phagocytophilum (strain HZ)</name>
    <dbReference type="NCBI Taxonomy" id="212042"/>
    <lineage>
        <taxon>Bacteria</taxon>
        <taxon>Pseudomonadati</taxon>
        <taxon>Pseudomonadota</taxon>
        <taxon>Alphaproteobacteria</taxon>
        <taxon>Rickettsiales</taxon>
        <taxon>Anaplasmataceae</taxon>
        <taxon>Anaplasma</taxon>
        <taxon>phagocytophilum group</taxon>
    </lineage>
</organism>
<reference key="1">
    <citation type="journal article" date="2006" name="PLoS Genet.">
        <title>Comparative genomics of emerging human ehrlichiosis agents.</title>
        <authorList>
            <person name="Dunning Hotopp J.C."/>
            <person name="Lin M."/>
            <person name="Madupu R."/>
            <person name="Crabtree J."/>
            <person name="Angiuoli S.V."/>
            <person name="Eisen J.A."/>
            <person name="Seshadri R."/>
            <person name="Ren Q."/>
            <person name="Wu M."/>
            <person name="Utterback T.R."/>
            <person name="Smith S."/>
            <person name="Lewis M."/>
            <person name="Khouri H."/>
            <person name="Zhang C."/>
            <person name="Niu H."/>
            <person name="Lin Q."/>
            <person name="Ohashi N."/>
            <person name="Zhi N."/>
            <person name="Nelson W.C."/>
            <person name="Brinkac L.M."/>
            <person name="Dodson R.J."/>
            <person name="Rosovitz M.J."/>
            <person name="Sundaram J.P."/>
            <person name="Daugherty S.C."/>
            <person name="Davidsen T."/>
            <person name="Durkin A.S."/>
            <person name="Gwinn M.L."/>
            <person name="Haft D.H."/>
            <person name="Selengut J.D."/>
            <person name="Sullivan S.A."/>
            <person name="Zafar N."/>
            <person name="Zhou L."/>
            <person name="Benahmed F."/>
            <person name="Forberger H."/>
            <person name="Halpin R."/>
            <person name="Mulligan S."/>
            <person name="Robinson J."/>
            <person name="White O."/>
            <person name="Rikihisa Y."/>
            <person name="Tettelin H."/>
        </authorList>
    </citation>
    <scope>NUCLEOTIDE SEQUENCE [LARGE SCALE GENOMIC DNA]</scope>
    <source>
        <strain>HZ</strain>
    </source>
</reference>
<gene>
    <name evidence="1" type="primary">smpB</name>
    <name type="ordered locus">APH_1331</name>
</gene>
<evidence type="ECO:0000255" key="1">
    <source>
        <dbReference type="HAMAP-Rule" id="MF_00023"/>
    </source>
</evidence>
<name>SSRP_ANAPZ</name>
<comment type="function">
    <text evidence="1">Required for rescue of stalled ribosomes mediated by trans-translation. Binds to transfer-messenger RNA (tmRNA), required for stable association of tmRNA with ribosomes. tmRNA and SmpB together mimic tRNA shape, replacing the anticodon stem-loop with SmpB. tmRNA is encoded by the ssrA gene; the 2 termini fold to resemble tRNA(Ala) and it encodes a 'tag peptide', a short internal open reading frame. During trans-translation Ala-aminoacylated tmRNA acts like a tRNA, entering the A-site of stalled ribosomes, displacing the stalled mRNA. The ribosome then switches to translate the ORF on the tmRNA; the nascent peptide is terminated with the 'tag peptide' encoded by the tmRNA and targeted for degradation. The ribosome is freed to recommence translation, which seems to be the essential function of trans-translation.</text>
</comment>
<comment type="subcellular location">
    <subcellularLocation>
        <location evidence="1">Cytoplasm</location>
    </subcellularLocation>
    <text evidence="1">The tmRNA-SmpB complex associates with stalled 70S ribosomes.</text>
</comment>
<comment type="similarity">
    <text evidence="1">Belongs to the SmpB family.</text>
</comment>
<protein>
    <recommendedName>
        <fullName evidence="1">SsrA-binding protein</fullName>
    </recommendedName>
    <alternativeName>
        <fullName evidence="1">Small protein B</fullName>
    </alternativeName>
</protein>
<feature type="chain" id="PRO_1000001992" description="SsrA-binding protein">
    <location>
        <begin position="1"/>
        <end position="149"/>
    </location>
</feature>
<keyword id="KW-0963">Cytoplasm</keyword>
<keyword id="KW-0694">RNA-binding</keyword>
<proteinExistence type="inferred from homology"/>